<organism>
    <name type="scientific">Bacillus cereus (strain AH820)</name>
    <dbReference type="NCBI Taxonomy" id="405535"/>
    <lineage>
        <taxon>Bacteria</taxon>
        <taxon>Bacillati</taxon>
        <taxon>Bacillota</taxon>
        <taxon>Bacilli</taxon>
        <taxon>Bacillales</taxon>
        <taxon>Bacillaceae</taxon>
        <taxon>Bacillus</taxon>
        <taxon>Bacillus cereus group</taxon>
    </lineage>
</organism>
<accession>B7JP70</accession>
<sequence length="212" mass="24338">MGTNKPVVIGIAGGSGSGKTSVTKAIFDHFKGHSILILEQDYYYKDQSHLPMEERLKTNYDHPLAFDNDLLIEHLQQLLAYKQVDKPVYDYTLHTRSEEIIPVEPKDVIILEGILILEDPRLCELMDIKLFVDTDADLRILRRMQRDIKERGRTMDSVIDQYVNVVRPMHNQFIEPSKKFADIIIPEGGQNHVAIDIMVTKIATILEQKVNL</sequence>
<evidence type="ECO:0000255" key="1">
    <source>
        <dbReference type="HAMAP-Rule" id="MF_00551"/>
    </source>
</evidence>
<protein>
    <recommendedName>
        <fullName evidence="1">Uridine kinase</fullName>
        <ecNumber evidence="1">2.7.1.48</ecNumber>
    </recommendedName>
    <alternativeName>
        <fullName evidence="1">Cytidine monophosphokinase</fullName>
    </alternativeName>
    <alternativeName>
        <fullName evidence="1">Uridine monophosphokinase</fullName>
    </alternativeName>
</protein>
<feature type="chain" id="PRO_1000129064" description="Uridine kinase">
    <location>
        <begin position="1"/>
        <end position="212"/>
    </location>
</feature>
<feature type="binding site" evidence="1">
    <location>
        <begin position="13"/>
        <end position="20"/>
    </location>
    <ligand>
        <name>ATP</name>
        <dbReference type="ChEBI" id="CHEBI:30616"/>
    </ligand>
</feature>
<proteinExistence type="inferred from homology"/>
<dbReference type="EC" id="2.7.1.48" evidence="1"/>
<dbReference type="EMBL" id="CP001283">
    <property type="protein sequence ID" value="ACK90917.1"/>
    <property type="molecule type" value="Genomic_DNA"/>
</dbReference>
<dbReference type="RefSeq" id="WP_000537085.1">
    <property type="nucleotide sequence ID" value="NC_011773.1"/>
</dbReference>
<dbReference type="SMR" id="B7JP70"/>
<dbReference type="KEGG" id="bcu:BCAH820_4460"/>
<dbReference type="HOGENOM" id="CLU_021278_1_2_9"/>
<dbReference type="UniPathway" id="UPA00574">
    <property type="reaction ID" value="UER00637"/>
</dbReference>
<dbReference type="UniPathway" id="UPA00579">
    <property type="reaction ID" value="UER00640"/>
</dbReference>
<dbReference type="Proteomes" id="UP000001363">
    <property type="component" value="Chromosome"/>
</dbReference>
<dbReference type="GO" id="GO:0005737">
    <property type="term" value="C:cytoplasm"/>
    <property type="evidence" value="ECO:0007669"/>
    <property type="project" value="UniProtKB-SubCell"/>
</dbReference>
<dbReference type="GO" id="GO:0005524">
    <property type="term" value="F:ATP binding"/>
    <property type="evidence" value="ECO:0007669"/>
    <property type="project" value="UniProtKB-UniRule"/>
</dbReference>
<dbReference type="GO" id="GO:0043771">
    <property type="term" value="F:cytidine kinase activity"/>
    <property type="evidence" value="ECO:0007669"/>
    <property type="project" value="RHEA"/>
</dbReference>
<dbReference type="GO" id="GO:0004849">
    <property type="term" value="F:uridine kinase activity"/>
    <property type="evidence" value="ECO:0007669"/>
    <property type="project" value="UniProtKB-UniRule"/>
</dbReference>
<dbReference type="GO" id="GO:0044211">
    <property type="term" value="P:CTP salvage"/>
    <property type="evidence" value="ECO:0007669"/>
    <property type="project" value="UniProtKB-UniRule"/>
</dbReference>
<dbReference type="GO" id="GO:0044206">
    <property type="term" value="P:UMP salvage"/>
    <property type="evidence" value="ECO:0007669"/>
    <property type="project" value="UniProtKB-UniRule"/>
</dbReference>
<dbReference type="CDD" id="cd02023">
    <property type="entry name" value="UMPK"/>
    <property type="match status" value="1"/>
</dbReference>
<dbReference type="Gene3D" id="3.40.50.300">
    <property type="entry name" value="P-loop containing nucleotide triphosphate hydrolases"/>
    <property type="match status" value="1"/>
</dbReference>
<dbReference type="HAMAP" id="MF_00551">
    <property type="entry name" value="Uridine_kinase"/>
    <property type="match status" value="1"/>
</dbReference>
<dbReference type="InterPro" id="IPR027417">
    <property type="entry name" value="P-loop_NTPase"/>
</dbReference>
<dbReference type="InterPro" id="IPR006083">
    <property type="entry name" value="PRK/URK"/>
</dbReference>
<dbReference type="InterPro" id="IPR026008">
    <property type="entry name" value="Uridine_kinase"/>
</dbReference>
<dbReference type="InterPro" id="IPR000764">
    <property type="entry name" value="Uridine_kinase-like"/>
</dbReference>
<dbReference type="NCBIfam" id="NF004018">
    <property type="entry name" value="PRK05480.1"/>
    <property type="match status" value="1"/>
</dbReference>
<dbReference type="NCBIfam" id="TIGR00235">
    <property type="entry name" value="udk"/>
    <property type="match status" value="1"/>
</dbReference>
<dbReference type="PANTHER" id="PTHR10285">
    <property type="entry name" value="URIDINE KINASE"/>
    <property type="match status" value="1"/>
</dbReference>
<dbReference type="Pfam" id="PF00485">
    <property type="entry name" value="PRK"/>
    <property type="match status" value="1"/>
</dbReference>
<dbReference type="PRINTS" id="PR00988">
    <property type="entry name" value="URIDINKINASE"/>
</dbReference>
<dbReference type="SUPFAM" id="SSF52540">
    <property type="entry name" value="P-loop containing nucleoside triphosphate hydrolases"/>
    <property type="match status" value="1"/>
</dbReference>
<comment type="catalytic activity">
    <reaction evidence="1">
        <text>uridine + ATP = UMP + ADP + H(+)</text>
        <dbReference type="Rhea" id="RHEA:16825"/>
        <dbReference type="ChEBI" id="CHEBI:15378"/>
        <dbReference type="ChEBI" id="CHEBI:16704"/>
        <dbReference type="ChEBI" id="CHEBI:30616"/>
        <dbReference type="ChEBI" id="CHEBI:57865"/>
        <dbReference type="ChEBI" id="CHEBI:456216"/>
        <dbReference type="EC" id="2.7.1.48"/>
    </reaction>
</comment>
<comment type="catalytic activity">
    <reaction evidence="1">
        <text>cytidine + ATP = CMP + ADP + H(+)</text>
        <dbReference type="Rhea" id="RHEA:24674"/>
        <dbReference type="ChEBI" id="CHEBI:15378"/>
        <dbReference type="ChEBI" id="CHEBI:17562"/>
        <dbReference type="ChEBI" id="CHEBI:30616"/>
        <dbReference type="ChEBI" id="CHEBI:60377"/>
        <dbReference type="ChEBI" id="CHEBI:456216"/>
        <dbReference type="EC" id="2.7.1.48"/>
    </reaction>
</comment>
<comment type="pathway">
    <text evidence="1">Pyrimidine metabolism; CTP biosynthesis via salvage pathway; CTP from cytidine: step 1/3.</text>
</comment>
<comment type="pathway">
    <text evidence="1">Pyrimidine metabolism; UMP biosynthesis via salvage pathway; UMP from uridine: step 1/1.</text>
</comment>
<comment type="subcellular location">
    <subcellularLocation>
        <location evidence="1">Cytoplasm</location>
    </subcellularLocation>
</comment>
<comment type="similarity">
    <text evidence="1">Belongs to the uridine kinase family.</text>
</comment>
<keyword id="KW-0067">ATP-binding</keyword>
<keyword id="KW-0963">Cytoplasm</keyword>
<keyword id="KW-0418">Kinase</keyword>
<keyword id="KW-0547">Nucleotide-binding</keyword>
<keyword id="KW-0808">Transferase</keyword>
<reference key="1">
    <citation type="submission" date="2008-10" db="EMBL/GenBank/DDBJ databases">
        <title>Genome sequence of Bacillus cereus AH820.</title>
        <authorList>
            <person name="Dodson R.J."/>
            <person name="Durkin A.S."/>
            <person name="Rosovitz M.J."/>
            <person name="Rasko D.A."/>
            <person name="Hoffmaster A."/>
            <person name="Ravel J."/>
            <person name="Sutton G."/>
        </authorList>
    </citation>
    <scope>NUCLEOTIDE SEQUENCE [LARGE SCALE GENOMIC DNA]</scope>
    <source>
        <strain>AH820</strain>
    </source>
</reference>
<gene>
    <name evidence="1" type="primary">udk</name>
    <name type="ordered locus">BCAH820_4460</name>
</gene>
<name>URK_BACC0</name>